<feature type="chain" id="PRO_1000140129" description="Shikimate kinase 2">
    <location>
        <begin position="1"/>
        <end position="174"/>
    </location>
</feature>
<feature type="region of interest" description="LID domain">
    <location>
        <begin position="112"/>
        <end position="126"/>
    </location>
</feature>
<feature type="binding site" evidence="1">
    <location>
        <begin position="12"/>
        <end position="17"/>
    </location>
    <ligand>
        <name>ATP</name>
        <dbReference type="ChEBI" id="CHEBI:30616"/>
    </ligand>
</feature>
<feature type="binding site" evidence="1">
    <location>
        <position position="16"/>
    </location>
    <ligand>
        <name>Mg(2+)</name>
        <dbReference type="ChEBI" id="CHEBI:18420"/>
    </ligand>
</feature>
<feature type="binding site" evidence="1">
    <location>
        <position position="32"/>
    </location>
    <ligand>
        <name>Mg(2+)</name>
        <dbReference type="ChEBI" id="CHEBI:18420"/>
    </ligand>
</feature>
<feature type="binding site" evidence="1">
    <location>
        <position position="34"/>
    </location>
    <ligand>
        <name>substrate</name>
    </ligand>
</feature>
<feature type="binding site" evidence="1">
    <location>
        <position position="58"/>
    </location>
    <ligand>
        <name>substrate</name>
    </ligand>
</feature>
<feature type="binding site" evidence="1">
    <location>
        <position position="79"/>
    </location>
    <ligand>
        <name>substrate</name>
    </ligand>
</feature>
<feature type="binding site" evidence="1">
    <location>
        <position position="120"/>
    </location>
    <ligand>
        <name>ATP</name>
        <dbReference type="ChEBI" id="CHEBI:30616"/>
    </ligand>
</feature>
<feature type="binding site" evidence="1">
    <location>
        <position position="139"/>
    </location>
    <ligand>
        <name>substrate</name>
    </ligand>
</feature>
<comment type="function">
    <text evidence="1">Catalyzes the specific phosphorylation of the 3-hydroxyl group of shikimic acid using ATP as a cosubstrate.</text>
</comment>
<comment type="catalytic activity">
    <reaction evidence="1">
        <text>shikimate + ATP = 3-phosphoshikimate + ADP + H(+)</text>
        <dbReference type="Rhea" id="RHEA:13121"/>
        <dbReference type="ChEBI" id="CHEBI:15378"/>
        <dbReference type="ChEBI" id="CHEBI:30616"/>
        <dbReference type="ChEBI" id="CHEBI:36208"/>
        <dbReference type="ChEBI" id="CHEBI:145989"/>
        <dbReference type="ChEBI" id="CHEBI:456216"/>
        <dbReference type="EC" id="2.7.1.71"/>
    </reaction>
</comment>
<comment type="cofactor">
    <cofactor evidence="1">
        <name>Mg(2+)</name>
        <dbReference type="ChEBI" id="CHEBI:18420"/>
    </cofactor>
    <text evidence="1">Binds 1 Mg(2+) ion per subunit.</text>
</comment>
<comment type="pathway">
    <text evidence="1">Metabolic intermediate biosynthesis; chorismate biosynthesis; chorismate from D-erythrose 4-phosphate and phosphoenolpyruvate: step 5/7.</text>
</comment>
<comment type="subunit">
    <text evidence="1">Monomer.</text>
</comment>
<comment type="subcellular location">
    <subcellularLocation>
        <location evidence="1">Cytoplasm</location>
    </subcellularLocation>
</comment>
<comment type="domain">
    <text evidence="1">The LID domain closes over the active site upon ATP binding.</text>
</comment>
<comment type="similarity">
    <text evidence="1">Belongs to the shikimate kinase family. AroL subfamily.</text>
</comment>
<proteinExistence type="inferred from homology"/>
<protein>
    <recommendedName>
        <fullName evidence="1">Shikimate kinase 2</fullName>
        <shortName evidence="1">SK 2</shortName>
        <ecNumber evidence="1">2.7.1.71</ecNumber>
    </recommendedName>
</protein>
<dbReference type="EC" id="2.7.1.71" evidence="1"/>
<dbReference type="EMBL" id="CU928164">
    <property type="protein sequence ID" value="CAR16433.1"/>
    <property type="molecule type" value="Genomic_DNA"/>
</dbReference>
<dbReference type="RefSeq" id="WP_000193401.1">
    <property type="nucleotide sequence ID" value="NC_011750.1"/>
</dbReference>
<dbReference type="RefSeq" id="YP_002406336.1">
    <property type="nucleotide sequence ID" value="NC_011750.1"/>
</dbReference>
<dbReference type="SMR" id="B7NJB4"/>
<dbReference type="STRING" id="585057.ECIAI39_0293"/>
<dbReference type="KEGG" id="ect:ECIAI39_0293"/>
<dbReference type="PATRIC" id="fig|585057.6.peg.319"/>
<dbReference type="HOGENOM" id="CLU_057607_4_3_6"/>
<dbReference type="UniPathway" id="UPA00053">
    <property type="reaction ID" value="UER00088"/>
</dbReference>
<dbReference type="Proteomes" id="UP000000749">
    <property type="component" value="Chromosome"/>
</dbReference>
<dbReference type="GO" id="GO:0005829">
    <property type="term" value="C:cytosol"/>
    <property type="evidence" value="ECO:0007669"/>
    <property type="project" value="TreeGrafter"/>
</dbReference>
<dbReference type="GO" id="GO:0005524">
    <property type="term" value="F:ATP binding"/>
    <property type="evidence" value="ECO:0007669"/>
    <property type="project" value="UniProtKB-UniRule"/>
</dbReference>
<dbReference type="GO" id="GO:0000287">
    <property type="term" value="F:magnesium ion binding"/>
    <property type="evidence" value="ECO:0007669"/>
    <property type="project" value="UniProtKB-UniRule"/>
</dbReference>
<dbReference type="GO" id="GO:0004765">
    <property type="term" value="F:shikimate kinase activity"/>
    <property type="evidence" value="ECO:0007669"/>
    <property type="project" value="UniProtKB-UniRule"/>
</dbReference>
<dbReference type="GO" id="GO:0008652">
    <property type="term" value="P:amino acid biosynthetic process"/>
    <property type="evidence" value="ECO:0007669"/>
    <property type="project" value="UniProtKB-KW"/>
</dbReference>
<dbReference type="GO" id="GO:0009073">
    <property type="term" value="P:aromatic amino acid family biosynthetic process"/>
    <property type="evidence" value="ECO:0007669"/>
    <property type="project" value="UniProtKB-KW"/>
</dbReference>
<dbReference type="GO" id="GO:0009423">
    <property type="term" value="P:chorismate biosynthetic process"/>
    <property type="evidence" value="ECO:0007669"/>
    <property type="project" value="UniProtKB-UniRule"/>
</dbReference>
<dbReference type="CDD" id="cd00464">
    <property type="entry name" value="SK"/>
    <property type="match status" value="1"/>
</dbReference>
<dbReference type="FunFam" id="3.40.50.300:FF:000408">
    <property type="entry name" value="Shikimate kinase 2"/>
    <property type="match status" value="1"/>
</dbReference>
<dbReference type="Gene3D" id="3.40.50.300">
    <property type="entry name" value="P-loop containing nucleotide triphosphate hydrolases"/>
    <property type="match status" value="1"/>
</dbReference>
<dbReference type="HAMAP" id="MF_00109">
    <property type="entry name" value="Shikimate_kinase"/>
    <property type="match status" value="1"/>
</dbReference>
<dbReference type="HAMAP" id="MF_01269">
    <property type="entry name" value="Shikimate_kinase_2"/>
    <property type="match status" value="1"/>
</dbReference>
<dbReference type="InterPro" id="IPR027417">
    <property type="entry name" value="P-loop_NTPase"/>
</dbReference>
<dbReference type="InterPro" id="IPR031322">
    <property type="entry name" value="Shikimate/glucono_kinase"/>
</dbReference>
<dbReference type="InterPro" id="IPR000623">
    <property type="entry name" value="Shikimate_kinase/TSH1"/>
</dbReference>
<dbReference type="InterPro" id="IPR027544">
    <property type="entry name" value="Shikimate_kinase_2"/>
</dbReference>
<dbReference type="InterPro" id="IPR023000">
    <property type="entry name" value="Shikimate_kinase_CS"/>
</dbReference>
<dbReference type="NCBIfam" id="NF002988">
    <property type="entry name" value="PRK03731.1"/>
    <property type="match status" value="1"/>
</dbReference>
<dbReference type="PANTHER" id="PTHR21087">
    <property type="entry name" value="SHIKIMATE KINASE"/>
    <property type="match status" value="1"/>
</dbReference>
<dbReference type="PANTHER" id="PTHR21087:SF21">
    <property type="entry name" value="SHIKIMATE KINASE 2"/>
    <property type="match status" value="1"/>
</dbReference>
<dbReference type="Pfam" id="PF01202">
    <property type="entry name" value="SKI"/>
    <property type="match status" value="1"/>
</dbReference>
<dbReference type="PRINTS" id="PR01100">
    <property type="entry name" value="SHIKIMTKNASE"/>
</dbReference>
<dbReference type="SUPFAM" id="SSF52540">
    <property type="entry name" value="P-loop containing nucleoside triphosphate hydrolases"/>
    <property type="match status" value="1"/>
</dbReference>
<dbReference type="PROSITE" id="PS01128">
    <property type="entry name" value="SHIKIMATE_KINASE"/>
    <property type="match status" value="1"/>
</dbReference>
<reference key="1">
    <citation type="journal article" date="2009" name="PLoS Genet.">
        <title>Organised genome dynamics in the Escherichia coli species results in highly diverse adaptive paths.</title>
        <authorList>
            <person name="Touchon M."/>
            <person name="Hoede C."/>
            <person name="Tenaillon O."/>
            <person name="Barbe V."/>
            <person name="Baeriswyl S."/>
            <person name="Bidet P."/>
            <person name="Bingen E."/>
            <person name="Bonacorsi S."/>
            <person name="Bouchier C."/>
            <person name="Bouvet O."/>
            <person name="Calteau A."/>
            <person name="Chiapello H."/>
            <person name="Clermont O."/>
            <person name="Cruveiller S."/>
            <person name="Danchin A."/>
            <person name="Diard M."/>
            <person name="Dossat C."/>
            <person name="Karoui M.E."/>
            <person name="Frapy E."/>
            <person name="Garry L."/>
            <person name="Ghigo J.M."/>
            <person name="Gilles A.M."/>
            <person name="Johnson J."/>
            <person name="Le Bouguenec C."/>
            <person name="Lescat M."/>
            <person name="Mangenot S."/>
            <person name="Martinez-Jehanne V."/>
            <person name="Matic I."/>
            <person name="Nassif X."/>
            <person name="Oztas S."/>
            <person name="Petit M.A."/>
            <person name="Pichon C."/>
            <person name="Rouy Z."/>
            <person name="Ruf C.S."/>
            <person name="Schneider D."/>
            <person name="Tourret J."/>
            <person name="Vacherie B."/>
            <person name="Vallenet D."/>
            <person name="Medigue C."/>
            <person name="Rocha E.P.C."/>
            <person name="Denamur E."/>
        </authorList>
    </citation>
    <scope>NUCLEOTIDE SEQUENCE [LARGE SCALE GENOMIC DNA]</scope>
    <source>
        <strain>IAI39 / ExPEC</strain>
    </source>
</reference>
<sequence length="174" mass="19181">MTQPLFLIGPRGCGKTTVGMALADSLNRRFVDTDQWLQSQLNMTVAEIVEREEWTGFRARETAALEAVTAPSTVIATGGGIILTEFNRHFMQNNGIVVYLCAPVSVLVNRLQAAPEEDLRPTLTGKPLSEEVQEVLEERDALYREVAHIIIDATNEPSQVISEIRSALAQTINC</sequence>
<evidence type="ECO:0000255" key="1">
    <source>
        <dbReference type="HAMAP-Rule" id="MF_01269"/>
    </source>
</evidence>
<accession>B7NJB4</accession>
<organism>
    <name type="scientific">Escherichia coli O7:K1 (strain IAI39 / ExPEC)</name>
    <dbReference type="NCBI Taxonomy" id="585057"/>
    <lineage>
        <taxon>Bacteria</taxon>
        <taxon>Pseudomonadati</taxon>
        <taxon>Pseudomonadota</taxon>
        <taxon>Gammaproteobacteria</taxon>
        <taxon>Enterobacterales</taxon>
        <taxon>Enterobacteriaceae</taxon>
        <taxon>Escherichia</taxon>
    </lineage>
</organism>
<name>AROL_ECO7I</name>
<keyword id="KW-0028">Amino-acid biosynthesis</keyword>
<keyword id="KW-0057">Aromatic amino acid biosynthesis</keyword>
<keyword id="KW-0067">ATP-binding</keyword>
<keyword id="KW-0963">Cytoplasm</keyword>
<keyword id="KW-0418">Kinase</keyword>
<keyword id="KW-0460">Magnesium</keyword>
<keyword id="KW-0479">Metal-binding</keyword>
<keyword id="KW-0547">Nucleotide-binding</keyword>
<keyword id="KW-0808">Transferase</keyword>
<gene>
    <name evidence="1" type="primary">aroL</name>
    <name type="ordered locus">ECIAI39_0293</name>
</gene>